<evidence type="ECO:0000250" key="1"/>
<evidence type="ECO:0000255" key="2"/>
<evidence type="ECO:0000305" key="3"/>
<organism>
    <name type="scientific">Fusarium vanettenii</name>
    <name type="common">Neocosmospora pisi</name>
    <dbReference type="NCBI Taxonomy" id="2747968"/>
    <lineage>
        <taxon>Eukaryota</taxon>
        <taxon>Fungi</taxon>
        <taxon>Dikarya</taxon>
        <taxon>Ascomycota</taxon>
        <taxon>Pezizomycotina</taxon>
        <taxon>Sordariomycetes</taxon>
        <taxon>Hypocreomycetidae</taxon>
        <taxon>Hypocreales</taxon>
        <taxon>Nectriaceae</taxon>
        <taxon>Fusarium</taxon>
        <taxon>Fusarium solani species complex</taxon>
    </lineage>
</organism>
<reference key="1">
    <citation type="submission" date="1997-02" db="EMBL/GenBank/DDBJ databases">
        <authorList>
            <person name="Inoue S."/>
            <person name="Aist J.R."/>
            <person name="Turgeon B.G."/>
            <person name="Yoder O.C."/>
        </authorList>
    </citation>
    <scope>NUCLEOTIDE SEQUENCE [GENOMIC DNA]</scope>
    <source>
        <strain>T213</strain>
    </source>
</reference>
<keyword id="KW-0067">ATP-binding</keyword>
<keyword id="KW-0175">Coiled coil</keyword>
<keyword id="KW-0963">Cytoplasm</keyword>
<keyword id="KW-0206">Cytoskeleton</keyword>
<keyword id="KW-0243">Dynein</keyword>
<keyword id="KW-0493">Microtubule</keyword>
<keyword id="KW-0505">Motor protein</keyword>
<keyword id="KW-0547">Nucleotide-binding</keyword>
<keyword id="KW-0677">Repeat</keyword>
<comment type="function">
    <text>Cytoplasmic dynein acts as a motor for the intracellular retrograde motility of vesicles and organelles along microtubules. Dynein has ATPase activity; the force-producing power stroke is thought to occur on release of ADP.</text>
</comment>
<comment type="subunit">
    <text>Consists of at least two heavy chains and a number of intermediate and light chains.</text>
</comment>
<comment type="subcellular location">
    <subcellularLocation>
        <location>Cytoplasm</location>
        <location>Cytoskeleton</location>
    </subcellularLocation>
</comment>
<comment type="domain">
    <text>Dynein heavy chains probably consist of an N-terminal stem (which binds cargo and interacts with other dynein components), and the head or motor domain. The motor contains six tandemly-linked AAA domains in the head, which form a ring. A stalk-like structure (formed by two of the coiled coil domains) protrudes between AAA 4 and AAA 5 and terminates in a microtubule-binding site. A seventh domain may also contribute to this ring; it is not clear whether the N-terminus or the C-terminus forms this extra domain. There are four well-conserved and two non-conserved ATPase sites, one per AAA domain. Probably only one of these (within AAA 1) actually hydrolyzes ATP, the others may serve a regulatory function.</text>
</comment>
<comment type="similarity">
    <text evidence="3">Belongs to the dynein heavy chain family.</text>
</comment>
<dbReference type="EMBL" id="U84215">
    <property type="protein sequence ID" value="AAC33176.1"/>
    <property type="molecule type" value="Genomic_DNA"/>
</dbReference>
<dbReference type="SMR" id="P78716"/>
<dbReference type="VEuPathDB" id="FungiDB:NECHADRAFT_58345"/>
<dbReference type="GO" id="GO:0005737">
    <property type="term" value="C:cytoplasm"/>
    <property type="evidence" value="ECO:0007669"/>
    <property type="project" value="UniProtKB-KW"/>
</dbReference>
<dbReference type="GO" id="GO:0030286">
    <property type="term" value="C:dynein complex"/>
    <property type="evidence" value="ECO:0007669"/>
    <property type="project" value="UniProtKB-KW"/>
</dbReference>
<dbReference type="GO" id="GO:0005874">
    <property type="term" value="C:microtubule"/>
    <property type="evidence" value="ECO:0007669"/>
    <property type="project" value="UniProtKB-KW"/>
</dbReference>
<dbReference type="GO" id="GO:0005524">
    <property type="term" value="F:ATP binding"/>
    <property type="evidence" value="ECO:0007669"/>
    <property type="project" value="UniProtKB-KW"/>
</dbReference>
<dbReference type="GO" id="GO:0016887">
    <property type="term" value="F:ATP hydrolysis activity"/>
    <property type="evidence" value="ECO:0007669"/>
    <property type="project" value="InterPro"/>
</dbReference>
<dbReference type="GO" id="GO:0045505">
    <property type="term" value="F:dynein intermediate chain binding"/>
    <property type="evidence" value="ECO:0007669"/>
    <property type="project" value="InterPro"/>
</dbReference>
<dbReference type="GO" id="GO:0051959">
    <property type="term" value="F:dynein light intermediate chain binding"/>
    <property type="evidence" value="ECO:0007669"/>
    <property type="project" value="InterPro"/>
</dbReference>
<dbReference type="GO" id="GO:0008569">
    <property type="term" value="F:minus-end-directed microtubule motor activity"/>
    <property type="evidence" value="ECO:0007669"/>
    <property type="project" value="InterPro"/>
</dbReference>
<dbReference type="GO" id="GO:0007018">
    <property type="term" value="P:microtubule-based movement"/>
    <property type="evidence" value="ECO:0007669"/>
    <property type="project" value="InterPro"/>
</dbReference>
<dbReference type="CDD" id="cd00009">
    <property type="entry name" value="AAA"/>
    <property type="match status" value="2"/>
</dbReference>
<dbReference type="FunFam" id="1.20.920.20:FF:000002">
    <property type="entry name" value="Cytoplasmic dynein 1 heavy chain"/>
    <property type="match status" value="1"/>
</dbReference>
<dbReference type="FunFam" id="3.40.50.300:FF:000122">
    <property type="entry name" value="Cytoplasmic dynein 1 heavy chain"/>
    <property type="match status" value="1"/>
</dbReference>
<dbReference type="FunFam" id="1.10.287.2620:FF:000001">
    <property type="entry name" value="Cytoplasmic dynein heavy chain 1"/>
    <property type="match status" value="1"/>
</dbReference>
<dbReference type="FunFam" id="1.10.8.710:FF:000005">
    <property type="entry name" value="Cytoplasmic dynein heavy chain 1"/>
    <property type="match status" value="1"/>
</dbReference>
<dbReference type="FunFam" id="1.20.140.100:FF:000002">
    <property type="entry name" value="Cytoplasmic dynein heavy chain 1"/>
    <property type="match status" value="1"/>
</dbReference>
<dbReference type="FunFam" id="1.20.920.30:FF:000001">
    <property type="entry name" value="Cytoplasmic dynein heavy chain 1"/>
    <property type="match status" value="1"/>
</dbReference>
<dbReference type="FunFam" id="3.20.180.20:FF:000002">
    <property type="entry name" value="Cytoplasmic dynein heavy chain 1"/>
    <property type="match status" value="1"/>
</dbReference>
<dbReference type="FunFam" id="3.40.50.300:FF:000071">
    <property type="entry name" value="Cytoplasmic dynein heavy chain 1"/>
    <property type="match status" value="1"/>
</dbReference>
<dbReference type="FunFam" id="3.40.50.300:FF:000517">
    <property type="entry name" value="Cytoplasmic dynein heavy chain 1"/>
    <property type="match status" value="1"/>
</dbReference>
<dbReference type="FunFam" id="1.10.8.720:FF:000003">
    <property type="entry name" value="Cytoplasmic dynein heavy chain 2"/>
    <property type="match status" value="1"/>
</dbReference>
<dbReference type="FunFam" id="1.10.472.130:FF:000007">
    <property type="entry name" value="Dynein heavy chain, cytoplasmic"/>
    <property type="match status" value="1"/>
</dbReference>
<dbReference type="FunFam" id="1.10.8.1220:FF:000004">
    <property type="entry name" value="Dynein heavy chain, cytoplasmic"/>
    <property type="match status" value="1"/>
</dbReference>
<dbReference type="FunFam" id="3.40.50.300:FF:000075">
    <property type="entry name" value="Dynein heavy chain, cytoplasmic"/>
    <property type="match status" value="2"/>
</dbReference>
<dbReference type="FunFam" id="3.40.50.300:FF:000829">
    <property type="entry name" value="Dynein heavy chain, cytoplasmic"/>
    <property type="match status" value="1"/>
</dbReference>
<dbReference type="Gene3D" id="1.10.287.2620">
    <property type="match status" value="1"/>
</dbReference>
<dbReference type="Gene3D" id="1.10.472.130">
    <property type="match status" value="1"/>
</dbReference>
<dbReference type="Gene3D" id="1.10.8.1220">
    <property type="match status" value="1"/>
</dbReference>
<dbReference type="Gene3D" id="1.10.8.710">
    <property type="match status" value="1"/>
</dbReference>
<dbReference type="Gene3D" id="1.20.58.1120">
    <property type="match status" value="1"/>
</dbReference>
<dbReference type="Gene3D" id="1.20.920.20">
    <property type="match status" value="1"/>
</dbReference>
<dbReference type="Gene3D" id="1.20.920.30">
    <property type="match status" value="1"/>
</dbReference>
<dbReference type="Gene3D" id="6.10.140.1060">
    <property type="match status" value="1"/>
</dbReference>
<dbReference type="Gene3D" id="1.20.140.100">
    <property type="entry name" value="Dynein heavy chain, N-terminal domain 2"/>
    <property type="match status" value="1"/>
</dbReference>
<dbReference type="Gene3D" id="3.20.180.20">
    <property type="entry name" value="Dynein heavy chain, N-terminal domain 2"/>
    <property type="match status" value="1"/>
</dbReference>
<dbReference type="Gene3D" id="3.40.50.300">
    <property type="entry name" value="P-loop containing nucleotide triphosphate hydrolases"/>
    <property type="match status" value="5"/>
</dbReference>
<dbReference type="Gene3D" id="1.10.8.720">
    <property type="entry name" value="Region D6 of dynein motor"/>
    <property type="match status" value="1"/>
</dbReference>
<dbReference type="InterPro" id="IPR003593">
    <property type="entry name" value="AAA+_ATPase"/>
</dbReference>
<dbReference type="InterPro" id="IPR035699">
    <property type="entry name" value="AAA_6"/>
</dbReference>
<dbReference type="InterPro" id="IPR035706">
    <property type="entry name" value="AAA_9"/>
</dbReference>
<dbReference type="InterPro" id="IPR041658">
    <property type="entry name" value="AAA_lid_11"/>
</dbReference>
<dbReference type="InterPro" id="IPR042219">
    <property type="entry name" value="AAA_lid_11_sf"/>
</dbReference>
<dbReference type="InterPro" id="IPR026983">
    <property type="entry name" value="DHC"/>
</dbReference>
<dbReference type="InterPro" id="IPR054354">
    <property type="entry name" value="DYNC2H1-like_lid"/>
</dbReference>
<dbReference type="InterPro" id="IPR042222">
    <property type="entry name" value="Dynein_2_N"/>
</dbReference>
<dbReference type="InterPro" id="IPR043157">
    <property type="entry name" value="Dynein_AAA1S"/>
</dbReference>
<dbReference type="InterPro" id="IPR041466">
    <property type="entry name" value="Dynein_AAA5_ext"/>
</dbReference>
<dbReference type="InterPro" id="IPR024743">
    <property type="entry name" value="Dynein_HC_stalk"/>
</dbReference>
<dbReference type="InterPro" id="IPR024317">
    <property type="entry name" value="Dynein_heavy_chain_D4_dom"/>
</dbReference>
<dbReference type="InterPro" id="IPR004273">
    <property type="entry name" value="Dynein_heavy_D6_P-loop"/>
</dbReference>
<dbReference type="InterPro" id="IPR013602">
    <property type="entry name" value="Dynein_heavy_linker"/>
</dbReference>
<dbReference type="InterPro" id="IPR013594">
    <property type="entry name" value="Dynein_heavy_tail"/>
</dbReference>
<dbReference type="InterPro" id="IPR042228">
    <property type="entry name" value="Dynein_linker_3"/>
</dbReference>
<dbReference type="InterPro" id="IPR027417">
    <property type="entry name" value="P-loop_NTPase"/>
</dbReference>
<dbReference type="PANTHER" id="PTHR46532:SF4">
    <property type="entry name" value="AAA+ ATPASE DOMAIN-CONTAINING PROTEIN"/>
    <property type="match status" value="1"/>
</dbReference>
<dbReference type="PANTHER" id="PTHR46532">
    <property type="entry name" value="MALE FERTILITY FACTOR KL5"/>
    <property type="match status" value="1"/>
</dbReference>
<dbReference type="Pfam" id="PF12774">
    <property type="entry name" value="AAA_6"/>
    <property type="match status" value="1"/>
</dbReference>
<dbReference type="Pfam" id="PF12775">
    <property type="entry name" value="AAA_7"/>
    <property type="match status" value="1"/>
</dbReference>
<dbReference type="Pfam" id="PF12780">
    <property type="entry name" value="AAA_8"/>
    <property type="match status" value="1"/>
</dbReference>
<dbReference type="Pfam" id="PF12781">
    <property type="entry name" value="AAA_9"/>
    <property type="match status" value="1"/>
</dbReference>
<dbReference type="Pfam" id="PF18198">
    <property type="entry name" value="AAA_lid_11"/>
    <property type="match status" value="1"/>
</dbReference>
<dbReference type="Pfam" id="PF08385">
    <property type="entry name" value="DHC_N1"/>
    <property type="match status" value="1"/>
</dbReference>
<dbReference type="Pfam" id="PF08393">
    <property type="entry name" value="DHC_N2"/>
    <property type="match status" value="1"/>
</dbReference>
<dbReference type="Pfam" id="PF22597">
    <property type="entry name" value="DYN_lid"/>
    <property type="match status" value="1"/>
</dbReference>
<dbReference type="Pfam" id="PF17852">
    <property type="entry name" value="Dynein_AAA_lid"/>
    <property type="match status" value="1"/>
</dbReference>
<dbReference type="Pfam" id="PF03028">
    <property type="entry name" value="Dynein_heavy"/>
    <property type="match status" value="1"/>
</dbReference>
<dbReference type="Pfam" id="PF12777">
    <property type="entry name" value="MT"/>
    <property type="match status" value="1"/>
</dbReference>
<dbReference type="SMART" id="SM00382">
    <property type="entry name" value="AAA"/>
    <property type="match status" value="3"/>
</dbReference>
<dbReference type="SUPFAM" id="SSF52540">
    <property type="entry name" value="P-loop containing nucleoside triphosphate hydrolases"/>
    <property type="match status" value="4"/>
</dbReference>
<gene>
    <name type="primary">DHC1</name>
</gene>
<name>DYHC_FUSVN</name>
<protein>
    <recommendedName>
        <fullName>Dynein heavy chain, cytoplasmic</fullName>
    </recommendedName>
    <alternativeName>
        <fullName>Dynein heavy chain, cytosolic</fullName>
        <shortName>DYHC</shortName>
    </alternativeName>
</protein>
<proteinExistence type="inferred from homology"/>
<sequence>MEVTSAAAPSTGSSANGVTAAAPFPTIEPERVVEHLAAVCEIALGATRDELEQLGSLLHKARYGETVSRCTRFASDSQNVLYIQKDIANPSAVEAGADPAAPVTYNYTLSTEISSSSTTVSSLVLIKSPQPIDPTRPLTSQIFITNLPGPASLNAGVGEQGTALSPWEVLHSQVHHALVPYFDANTKSQQLANGSRGRADVDAKTGIPVTKKRLNDLELSLLHLQQNVDIPEISLTFHSIVQNVLDDAESRHTRPSLDAIPQIFSQDSTFLNRLQANVNTWIKSIQGITKLTKDPSSNANQEFNTASQEVNFWLSMESALEGIEGQLRSEGVLLTLEILKHAKRFQATVSFTADTGLKEAMDKVQKYNQLMRDFPLDELLSATSLSKAQEAIAQIFGHLNKKLRICPYPIRRALPLVEAISADLDEVLHRLLPGTELVNLDYQQFQTIMQTCDDIFRTWEENVKEFTNVAREVTRRRNEKFIPIKINKKHSELESRIKYVSTFRDNHEQLQRTIINVLGPQATIPGVTETTGSNGIVMEEMGDVDAVEEVKQAWEALHNVDLLDVTDQGKERWVRAENLYNERTTRVENSIIARLRDRLATAKTANEMFRVFSKFNALFVRPKIRGAIQEYQNQLMDHVKQAINGLHERFKQQYGHSETHAMAQLRDLPPVSGAIIWARQIEFQLDGYMRKVEAVLGPDWTMHTEGHKLQEESELFKQKLDTARIYEAWIADVGRRKISISGQLFEIARVRSAGGILELTVNFDPQVITLFKETRNLTWQSYSVPHAVTTVSKDAKRVYPYAVSLMESVRTLSQTLRQISVMGEESVLLFGYRNDVYKLISEGVPLRWESFINSHELFYSDNRQTRPLLPGGTDFGLAKNTESKHGMFIRGFAAAVSVLQQKAVSLNFIHATVEQALKELNTCPYEEAAFHSRLDTIQAAVDQLNLEQYVNLDFWVRGLNSKVQSILLTRLQSAVHAWIEAFEDDTPDDEMRRKVNNNNEEAKPDGPTMKRLVLELAMRNQVIYLDLLLEFARASWFLHLHEWLGIVCNLRKIKATRYQMSLTTTANDEPRFTDLPSECAGLLQRVYVSVEKKLHEVSAYVDKWLQFQSLWDLQSEQVYDALGEQLPRWLQLLQEIRKTRSTFDTQEVSRAFGHLTIDYDQVQTKVNAKYDQWQHEILMKFASRLGNRMREINAEIEKARKHLESQSSDASSTAQAVQFITVVQSCKRNVKTWAPEIDMFRQGQSTLVRQRYQFPNDWLHIEQIDSQWEALKEILEKKSRIVQDQTDALQAKIVAEDKLINERIAEIAAQWNEEKPVSGTIQPDVASATLSSFESRISKLQDDAQMVAKAKEALDIPASPDTSLEATLEEVRDFQSVWSNLSTIWASLNETRDVLWTAVQPRKIRSKVDDLIKSTKEMPSRMRQYAAFEHVQGILRGFLKVNSILSDLKSDAIRERHWHKIYKQIKPQKRFSPSSMTLGDVWDLNLVATEVIVKDIIAQAQGEMVLEEFLKQVRETWQNYALEMVNYQNKIGLIRGWDDLFAKCSENLNSLQAMKHSPYYKEFEEEAVAWEDKLNRVHVLFDVWIDVQRQWVYLEGVFTGNADIKHLLPIESGRFQNINSEFLAVMKKANKSPYVLEVLNIPNVQKSLERLAEMLNKIQKALGEYLEKERVSFPRFYFVGDEDLLEMIGNSNDTLRIAKHFKKMFAGLSGLVMDDETVISGFTSKEGEVVRLKKEISLAKTPKINDWLALLEGGMKSTLAELLAEAVDQYTPIFESETIDREALNGFMDAYPSQIVVLATQVVWTTAVHKSLTTGGETLKAIFDREVRVLRVLADTVLGELEVILRKKCEQQITECVHQRDTIEKLINAKANSTNHYLWQLQMRYVYEPQGEYLDRLYIKMANAKLNYGFEYLGVPERLVRTPLTDRCFLTLTQALCQRLGGSPYGPAGTGKTESVKALGVQLGRFTLVFCCDDTFDFQAMGRIFLGICQVGAWGCFDEFNRLEERILSAVSQEIQNIQLGLKQGVEDDQSQIELVGRHLHVNENTGIFITMNPGYAGRSNLPDNLKKLFRSVAMSKPDKELIAEVMLYSQGFNQAKQLSKQTVPFFDQCSGRLSKQAHYDFGLRALKSVLVSSGGLKRARLGEGSLGAEEVVEPEIIVQSIRETIAPKLIKSDVDIMATIETDCFPGVQYVPANLEALENAIRELAAERHLVVNELWMTKVLQLYQIQKIHHGVMMVGNSGSGKSAAWRLLLDALQKVEGVEGVSHVIDSKVMSKEALYGNLDSTTREWTDGLFTSILRKIVDNLRGEDSKRHWIVFDGDVDPEWVENLNSVLDDNKLLTLPNGERLNLPANVRIMFEVETLKYATLATVSRCGMVWFSEDTVSPTMMVQNYLSTLRSVPFEDLDEDSVATGHTPAKTLAVQSEFASLLHVYLTDENFILPALQRAEGYNHIMEFTTARVLTTLFSLLNKAVRDAIEYNGQHSDFPLESEQIESFISKKLLLALVWALTGDCPLTDRKSFGDDICALANFGSPPLDGNSSLIDFDVTLPKAEWAPWQNQVPSVEVNTHSITQTDVVIPTLDTVRHENVLYSWLAEHKPLLLCGPPGSGKTMTLFSALRKLPNMEVVGLNFSSATTPDLLIKTFEQYCEYKKTLNGVMLSPTQIGRWLVIFCDEINLPAPDKYGTQRAISFLRQLVEHNGFWRTSDKSWVTLDRIQFVGACNPPTDAGRTPMGARFLRHAPLIMVDYPGELSLNQIYGTFNSAVLKIIPSLRGYAEPLTHAMVRFYLESQQRFTPKIQPHYVYSPRELTRWVRGVYEAIRPLEALTIEGLIRIWAHEALRLFQDRLVAEEERQWTDESVRRIALEFFPNIDEEKALGGPILFSNWLSKNYVPVDREQLRDFVKARLKTFCEEEVDVPLILFNDVLEHVLRIDRVFRQPQGHLILIGVSGSGKTTLSRFVAWMNGLKVFQIKVHGKYSAEDFDDDLRDVLRRCGCKGEKICFIMDESNVLDSGFLERMNTLLANAEVPGLFEGDEYAALMTACKEGAQRQNLRLDSPEEMYKWFTQQIVKNLHVVFTMNPPEDGLSSKAATSPALFNRCVLNWFGDWSDQALFQVGHELTQSIDLDRSNFECPDTIPVAYRGLQLPPSHRERVVNSMVHIHYSLQRYNEKLLKQQGKVTFLRPRHFLDFVTQYIKLYNEKREDLEEQQRHLNVGLEKLRDTVDKVRDLRVSLAEKKKQLEQKDAEANEKLQRMVADQREAEQRKNTSLEIQANLEKQEAEVASRKKVVLEDLAKAEPAVEEAKASVSNIKRQHLTEVRSMGNPPQGVRLAMDAVCTLLGHRINDWKAVQGILRKDDFIASILMFDNAKQMTKGLRNKMRNDFLSNPEFTFEKVNRASKACGPLVQWVAAQVNYFDILDRVGPLKIEVEQLEDQALETKAQAKSVQNNIADLEASINTYKTEYAALISETQAIKAEMSRVQFKVDRSVRLLDSLSSERVRWEAGSKSFEIQISTLVGDVLVAAAFLAYSGLYDQTFRKSMMDDWFHQLHLSGIQYKSPNPVTEYLSTADERLGWQENALPVDDLCTENAIILKRFNRYPLIIDPSGRVTEFLQKECKDRRLTVTSFLDDTFTKQLESSLRFGNPILIQDAEHLDPILNHVLNKECQRTGGRVLIQLGKQEIDFSPAFKLYLSTRDPSATFAPDICSRTTFVNFTVTQSSLQTQSLNDVLKSERPDVDERRSNLIKLQGEFKIHLRQLEKRLLQALNESRGNILDDDNVIETLETLKTEAAEISAKMSNTEGVMAEVEEITQQYSIIARSCSAVFAVLEQLHYLNHFYQFSLQYFLDIFQSVLHGNKNLANETDHNARRDVIVHDLFVNTFKRTALGLLQKDRITLGMLLAQASPYKMDKSVIDMILDNRVEGKDLSSHPDDRENAFAQAKKLSAIKDKIDAISTEDWDKFFTEELAENAVPHIWDEKTEAIDQALLSLLLVKLFRMDRFVPAAERFVAQVFGSDIFDIVEDLKQTVTQVSATLPISLVSSPGFDASYKVDNLVERMRVKCTNIAMGSNEGLASADKAISNAAQTGSWVLVKNVHLAPTWLQSLEKRMESLNPHSDFRLFLSMESSPKIPVNLLRASRVLMYEQPAGVRANMKDSMSSLSTRATKSPVERTRLYLLLSFLHAVVQERLRYAPNLGWKGFWEFNDSDYECSAYIVDTWIDGVAGNRTNLAPQNIPWEMLRYLVTETYGGKIDDEGDFKLLSQLVTSFLTPAAYEVDHKLVDGPEGGLVVPSGTSFQDFNAWIHRLPEREPPTYLGLPANAEKLLLGGLGRSLIGNLRKVTELLDEGEQLVTEV</sequence>
<accession>P78716</accession>
<feature type="chain" id="PRO_0000114639" description="Dynein heavy chain, cytoplasmic">
    <location>
        <begin position="1"/>
        <end position="4349"/>
    </location>
</feature>
<feature type="region of interest" description="Stem" evidence="1">
    <location>
        <begin position="1"/>
        <end position="1907"/>
    </location>
</feature>
<feature type="region of interest" description="AAA 1" evidence="1">
    <location>
        <begin position="1908"/>
        <end position="2133"/>
    </location>
</feature>
<feature type="region of interest" description="AAA 2" evidence="1">
    <location>
        <begin position="2201"/>
        <end position="2459"/>
    </location>
</feature>
<feature type="region of interest" description="AAA 3" evidence="1">
    <location>
        <begin position="2565"/>
        <end position="2814"/>
    </location>
</feature>
<feature type="region of interest" description="AAA 4" evidence="1">
    <location>
        <begin position="2908"/>
        <end position="3177"/>
    </location>
</feature>
<feature type="region of interest" description="Stalk" evidence="1">
    <location>
        <begin position="3186"/>
        <end position="3477"/>
    </location>
</feature>
<feature type="region of interest" description="AAA 5" evidence="1">
    <location>
        <begin position="3563"/>
        <end position="3792"/>
    </location>
</feature>
<feature type="region of interest" description="AAA 6" evidence="1">
    <location>
        <begin position="4001"/>
        <end position="4213"/>
    </location>
</feature>
<feature type="coiled-coil region" evidence="2">
    <location>
        <begin position="459"/>
        <end position="480"/>
    </location>
</feature>
<feature type="coiled-coil region" evidence="2">
    <location>
        <begin position="1178"/>
        <end position="1215"/>
    </location>
</feature>
<feature type="coiled-coil region" evidence="2">
    <location>
        <begin position="1266"/>
        <end position="1293"/>
    </location>
</feature>
<feature type="coiled-coil region" evidence="2">
    <location>
        <begin position="1334"/>
        <end position="1354"/>
    </location>
</feature>
<feature type="coiled-coil region" evidence="2">
    <location>
        <begin position="1560"/>
        <end position="1577"/>
    </location>
</feature>
<feature type="coiled-coil region" evidence="2">
    <location>
        <begin position="1640"/>
        <end position="1670"/>
    </location>
</feature>
<feature type="coiled-coil region" evidence="2">
    <location>
        <begin position="2194"/>
        <end position="2217"/>
    </location>
</feature>
<feature type="coiled-coil region" evidence="2">
    <location>
        <begin position="3186"/>
        <end position="3294"/>
    </location>
</feature>
<feature type="coiled-coil region" evidence="2">
    <location>
        <begin position="3420"/>
        <end position="3477"/>
    </location>
</feature>
<feature type="coiled-coil region" evidence="2">
    <location>
        <begin position="3774"/>
        <end position="3807"/>
    </location>
</feature>
<feature type="binding site" evidence="2">
    <location>
        <begin position="1946"/>
        <end position="1953"/>
    </location>
    <ligand>
        <name>ATP</name>
        <dbReference type="ChEBI" id="CHEBI:30616"/>
    </ligand>
</feature>
<feature type="binding site" evidence="2">
    <location>
        <begin position="2239"/>
        <end position="2246"/>
    </location>
    <ligand>
        <name>ATP</name>
        <dbReference type="ChEBI" id="CHEBI:30616"/>
    </ligand>
</feature>
<feature type="binding site" evidence="2">
    <location>
        <begin position="2604"/>
        <end position="2611"/>
    </location>
    <ligand>
        <name>ATP</name>
        <dbReference type="ChEBI" id="CHEBI:30616"/>
    </ligand>
</feature>
<feature type="binding site" evidence="2">
    <location>
        <begin position="2946"/>
        <end position="2953"/>
    </location>
    <ligand>
        <name>ATP</name>
        <dbReference type="ChEBI" id="CHEBI:30616"/>
    </ligand>
</feature>